<protein>
    <recommendedName>
        <fullName evidence="2">Translation initiation factor IF-2</fullName>
    </recommendedName>
</protein>
<accession>Q0I7K2</accession>
<evidence type="ECO:0000250" key="1"/>
<evidence type="ECO:0000255" key="2">
    <source>
        <dbReference type="HAMAP-Rule" id="MF_00100"/>
    </source>
</evidence>
<evidence type="ECO:0000256" key="3">
    <source>
        <dbReference type="SAM" id="MobiDB-lite"/>
    </source>
</evidence>
<reference key="1">
    <citation type="journal article" date="2006" name="Proc. Natl. Acad. Sci. U.S.A.">
        <title>Genome sequence of Synechococcus CC9311: insights into adaptation to a coastal environment.</title>
        <authorList>
            <person name="Palenik B."/>
            <person name="Ren Q."/>
            <person name="Dupont C.L."/>
            <person name="Myers G.S."/>
            <person name="Heidelberg J.F."/>
            <person name="Badger J.H."/>
            <person name="Madupu R."/>
            <person name="Nelson W.C."/>
            <person name="Brinkac L.M."/>
            <person name="Dodson R.J."/>
            <person name="Durkin A.S."/>
            <person name="Daugherty S.C."/>
            <person name="Sullivan S.A."/>
            <person name="Khouri H."/>
            <person name="Mohamoud Y."/>
            <person name="Halpin R."/>
            <person name="Paulsen I.T."/>
        </authorList>
    </citation>
    <scope>NUCLEOTIDE SEQUENCE [LARGE SCALE GENOMIC DNA]</scope>
    <source>
        <strain>CC9311</strain>
    </source>
</reference>
<proteinExistence type="inferred from homology"/>
<comment type="function">
    <text evidence="2">One of the essential components for the initiation of protein synthesis. Protects formylmethionyl-tRNA from spontaneous hydrolysis and promotes its binding to the 30S ribosomal subunits. Also involved in the hydrolysis of GTP during the formation of the 70S ribosomal complex.</text>
</comment>
<comment type="subcellular location">
    <subcellularLocation>
        <location evidence="2">Cytoplasm</location>
    </subcellularLocation>
</comment>
<comment type="similarity">
    <text evidence="2">Belongs to the TRAFAC class translation factor GTPase superfamily. Classic translation factor GTPase family. IF-2 subfamily.</text>
</comment>
<feature type="chain" id="PRO_1000008363" description="Translation initiation factor IF-2">
    <location>
        <begin position="1"/>
        <end position="1129"/>
    </location>
</feature>
<feature type="domain" description="tr-type G">
    <location>
        <begin position="621"/>
        <end position="793"/>
    </location>
</feature>
<feature type="region of interest" description="Disordered" evidence="3">
    <location>
        <begin position="33"/>
        <end position="462"/>
    </location>
</feature>
<feature type="region of interest" description="Disordered" evidence="3">
    <location>
        <begin position="485"/>
        <end position="515"/>
    </location>
</feature>
<feature type="region of interest" description="G1" evidence="1">
    <location>
        <begin position="630"/>
        <end position="637"/>
    </location>
</feature>
<feature type="region of interest" description="G2" evidence="1">
    <location>
        <begin position="655"/>
        <end position="659"/>
    </location>
</feature>
<feature type="region of interest" description="G3" evidence="1">
    <location>
        <begin position="680"/>
        <end position="683"/>
    </location>
</feature>
<feature type="region of interest" description="G4" evidence="1">
    <location>
        <begin position="734"/>
        <end position="737"/>
    </location>
</feature>
<feature type="region of interest" description="G5" evidence="1">
    <location>
        <begin position="770"/>
        <end position="772"/>
    </location>
</feature>
<feature type="compositionally biased region" description="Low complexity" evidence="3">
    <location>
        <begin position="33"/>
        <end position="42"/>
    </location>
</feature>
<feature type="compositionally biased region" description="Low complexity" evidence="3">
    <location>
        <begin position="56"/>
        <end position="99"/>
    </location>
</feature>
<feature type="compositionally biased region" description="Pro residues" evidence="3">
    <location>
        <begin position="100"/>
        <end position="112"/>
    </location>
</feature>
<feature type="compositionally biased region" description="Low complexity" evidence="3">
    <location>
        <begin position="135"/>
        <end position="147"/>
    </location>
</feature>
<feature type="compositionally biased region" description="Pro residues" evidence="3">
    <location>
        <begin position="148"/>
        <end position="161"/>
    </location>
</feature>
<feature type="compositionally biased region" description="Low complexity" evidence="3">
    <location>
        <begin position="162"/>
        <end position="175"/>
    </location>
</feature>
<feature type="compositionally biased region" description="Pro residues" evidence="3">
    <location>
        <begin position="176"/>
        <end position="191"/>
    </location>
</feature>
<feature type="compositionally biased region" description="Pro residues" evidence="3">
    <location>
        <begin position="211"/>
        <end position="221"/>
    </location>
</feature>
<feature type="compositionally biased region" description="Low complexity" evidence="3">
    <location>
        <begin position="257"/>
        <end position="273"/>
    </location>
</feature>
<feature type="compositionally biased region" description="Basic and acidic residues" evidence="3">
    <location>
        <begin position="431"/>
        <end position="445"/>
    </location>
</feature>
<feature type="compositionally biased region" description="Basic residues" evidence="3">
    <location>
        <begin position="490"/>
        <end position="499"/>
    </location>
</feature>
<feature type="compositionally biased region" description="Basic residues" evidence="3">
    <location>
        <begin position="506"/>
        <end position="515"/>
    </location>
</feature>
<feature type="binding site" evidence="2">
    <location>
        <begin position="630"/>
        <end position="637"/>
    </location>
    <ligand>
        <name>GTP</name>
        <dbReference type="ChEBI" id="CHEBI:37565"/>
    </ligand>
</feature>
<feature type="binding site" evidence="2">
    <location>
        <begin position="680"/>
        <end position="684"/>
    </location>
    <ligand>
        <name>GTP</name>
        <dbReference type="ChEBI" id="CHEBI:37565"/>
    </ligand>
</feature>
<feature type="binding site" evidence="2">
    <location>
        <begin position="734"/>
        <end position="737"/>
    </location>
    <ligand>
        <name>GTP</name>
        <dbReference type="ChEBI" id="CHEBI:37565"/>
    </ligand>
</feature>
<organism>
    <name type="scientific">Synechococcus sp. (strain CC9311)</name>
    <dbReference type="NCBI Taxonomy" id="64471"/>
    <lineage>
        <taxon>Bacteria</taxon>
        <taxon>Bacillati</taxon>
        <taxon>Cyanobacteriota</taxon>
        <taxon>Cyanophyceae</taxon>
        <taxon>Synechococcales</taxon>
        <taxon>Synechococcaceae</taxon>
        <taxon>Synechococcus</taxon>
    </lineage>
</organism>
<dbReference type="EMBL" id="CP000435">
    <property type="protein sequence ID" value="ABI47785.1"/>
    <property type="molecule type" value="Genomic_DNA"/>
</dbReference>
<dbReference type="RefSeq" id="WP_011620280.1">
    <property type="nucleotide sequence ID" value="NC_008319.1"/>
</dbReference>
<dbReference type="SMR" id="Q0I7K2"/>
<dbReference type="STRING" id="64471.sync_2373"/>
<dbReference type="KEGG" id="syg:sync_2373"/>
<dbReference type="eggNOG" id="COG0532">
    <property type="taxonomic scope" value="Bacteria"/>
</dbReference>
<dbReference type="HOGENOM" id="CLU_006301_7_0_3"/>
<dbReference type="OrthoDB" id="9811804at2"/>
<dbReference type="Proteomes" id="UP000001961">
    <property type="component" value="Chromosome"/>
</dbReference>
<dbReference type="GO" id="GO:0005829">
    <property type="term" value="C:cytosol"/>
    <property type="evidence" value="ECO:0007669"/>
    <property type="project" value="TreeGrafter"/>
</dbReference>
<dbReference type="GO" id="GO:0005525">
    <property type="term" value="F:GTP binding"/>
    <property type="evidence" value="ECO:0007669"/>
    <property type="project" value="UniProtKB-KW"/>
</dbReference>
<dbReference type="GO" id="GO:0003924">
    <property type="term" value="F:GTPase activity"/>
    <property type="evidence" value="ECO:0007669"/>
    <property type="project" value="UniProtKB-UniRule"/>
</dbReference>
<dbReference type="GO" id="GO:0003743">
    <property type="term" value="F:translation initiation factor activity"/>
    <property type="evidence" value="ECO:0007669"/>
    <property type="project" value="UniProtKB-UniRule"/>
</dbReference>
<dbReference type="CDD" id="cd01887">
    <property type="entry name" value="IF2_eIF5B"/>
    <property type="match status" value="1"/>
</dbReference>
<dbReference type="CDD" id="cd03702">
    <property type="entry name" value="IF2_mtIF2_II"/>
    <property type="match status" value="1"/>
</dbReference>
<dbReference type="CDD" id="cd03692">
    <property type="entry name" value="mtIF2_IVc"/>
    <property type="match status" value="1"/>
</dbReference>
<dbReference type="FunFam" id="2.40.30.10:FF:000007">
    <property type="entry name" value="Translation initiation factor IF-2"/>
    <property type="match status" value="1"/>
</dbReference>
<dbReference type="FunFam" id="2.40.30.10:FF:000008">
    <property type="entry name" value="Translation initiation factor IF-2"/>
    <property type="match status" value="1"/>
</dbReference>
<dbReference type="FunFam" id="3.40.50.10050:FF:000001">
    <property type="entry name" value="Translation initiation factor IF-2"/>
    <property type="match status" value="1"/>
</dbReference>
<dbReference type="FunFam" id="3.40.50.300:FF:000019">
    <property type="entry name" value="Translation initiation factor IF-2"/>
    <property type="match status" value="1"/>
</dbReference>
<dbReference type="Gene3D" id="1.10.10.2480">
    <property type="match status" value="1"/>
</dbReference>
<dbReference type="Gene3D" id="3.40.50.300">
    <property type="entry name" value="P-loop containing nucleotide triphosphate hydrolases"/>
    <property type="match status" value="1"/>
</dbReference>
<dbReference type="Gene3D" id="2.40.30.10">
    <property type="entry name" value="Translation factors"/>
    <property type="match status" value="2"/>
</dbReference>
<dbReference type="Gene3D" id="3.40.50.10050">
    <property type="entry name" value="Translation initiation factor IF- 2, domain 3"/>
    <property type="match status" value="1"/>
</dbReference>
<dbReference type="HAMAP" id="MF_00100_B">
    <property type="entry name" value="IF_2_B"/>
    <property type="match status" value="1"/>
</dbReference>
<dbReference type="InterPro" id="IPR053905">
    <property type="entry name" value="EF-G-like_DII"/>
</dbReference>
<dbReference type="InterPro" id="IPR044145">
    <property type="entry name" value="IF2_II"/>
</dbReference>
<dbReference type="InterPro" id="IPR006847">
    <property type="entry name" value="IF2_N"/>
</dbReference>
<dbReference type="InterPro" id="IPR027417">
    <property type="entry name" value="P-loop_NTPase"/>
</dbReference>
<dbReference type="InterPro" id="IPR005225">
    <property type="entry name" value="Small_GTP-bd"/>
</dbReference>
<dbReference type="InterPro" id="IPR000795">
    <property type="entry name" value="T_Tr_GTP-bd_dom"/>
</dbReference>
<dbReference type="InterPro" id="IPR000178">
    <property type="entry name" value="TF_IF2_bacterial-like"/>
</dbReference>
<dbReference type="InterPro" id="IPR015760">
    <property type="entry name" value="TIF_IF2"/>
</dbReference>
<dbReference type="InterPro" id="IPR023115">
    <property type="entry name" value="TIF_IF2_dom3"/>
</dbReference>
<dbReference type="InterPro" id="IPR036925">
    <property type="entry name" value="TIF_IF2_dom3_sf"/>
</dbReference>
<dbReference type="InterPro" id="IPR009000">
    <property type="entry name" value="Transl_B-barrel_sf"/>
</dbReference>
<dbReference type="NCBIfam" id="TIGR00487">
    <property type="entry name" value="IF-2"/>
    <property type="match status" value="1"/>
</dbReference>
<dbReference type="NCBIfam" id="TIGR00231">
    <property type="entry name" value="small_GTP"/>
    <property type="match status" value="1"/>
</dbReference>
<dbReference type="PANTHER" id="PTHR43381:SF5">
    <property type="entry name" value="TR-TYPE G DOMAIN-CONTAINING PROTEIN"/>
    <property type="match status" value="1"/>
</dbReference>
<dbReference type="PANTHER" id="PTHR43381">
    <property type="entry name" value="TRANSLATION INITIATION FACTOR IF-2-RELATED"/>
    <property type="match status" value="1"/>
</dbReference>
<dbReference type="Pfam" id="PF22042">
    <property type="entry name" value="EF-G_D2"/>
    <property type="match status" value="1"/>
</dbReference>
<dbReference type="Pfam" id="PF00009">
    <property type="entry name" value="GTP_EFTU"/>
    <property type="match status" value="1"/>
</dbReference>
<dbReference type="Pfam" id="PF11987">
    <property type="entry name" value="IF-2"/>
    <property type="match status" value="1"/>
</dbReference>
<dbReference type="Pfam" id="PF04760">
    <property type="entry name" value="IF2_N"/>
    <property type="match status" value="2"/>
</dbReference>
<dbReference type="PRINTS" id="PR01217">
    <property type="entry name" value="PRICHEXTENSN"/>
</dbReference>
<dbReference type="SUPFAM" id="SSF52156">
    <property type="entry name" value="Initiation factor IF2/eIF5b, domain 3"/>
    <property type="match status" value="1"/>
</dbReference>
<dbReference type="SUPFAM" id="SSF52540">
    <property type="entry name" value="P-loop containing nucleoside triphosphate hydrolases"/>
    <property type="match status" value="1"/>
</dbReference>
<dbReference type="SUPFAM" id="SSF50447">
    <property type="entry name" value="Translation proteins"/>
    <property type="match status" value="2"/>
</dbReference>
<dbReference type="PROSITE" id="PS51722">
    <property type="entry name" value="G_TR_2"/>
    <property type="match status" value="1"/>
</dbReference>
<dbReference type="PROSITE" id="PS01176">
    <property type="entry name" value="IF2"/>
    <property type="match status" value="1"/>
</dbReference>
<gene>
    <name evidence="2" type="primary">infB</name>
    <name type="ordered locus">sync_2373</name>
</gene>
<name>IF2_SYNS3</name>
<sequence>MTSSGKVRIYELSKDLGLENKDVLDAAEKLSIAARSHSSSISETEAGKIRTLLKQGGSPVASAPAKPAPGKAILSVRKASSPAAPSMPSKPAAPAAAKPSPKPSAPSRPEAPLPLIVQKPVSRQAAPQKPVSRQSTPAAAAPAAAPSAPAPSAPTPRPKPTAPKASAPAPTASAPSAPPRPTSARPTPAPARPTGTSPVKRPGSEASSPRPTAPPTRPQPKAPVNRGAPARPAPKPELVGRPQPKRAAPGAPVRQIGQRPGVSPRPSGPPGQRANMPQRPAGSQRPGAPTRPGNAPSKPGQPRSGASSLELVGKPIRRDGSNDGAGGRSDGQGRPPGAPRPGAPRPGGMPGMRKPVAPGELMQLQKPNSRPSAPPPRRVDGTPVATRSGEAAAGGAKATPPVSRPTATPPAAPRRPGFRPGPGAGGQRRPGRPDWDDSAKLEALRSKSPQKQRQKVHIIGENDDALTAETGGFAGERQAMVLSASLARPSKPRTKHKPAPKPVAAIRKRRKETARQRQRRRAMELRAAREAKQVRPEMIVVPEDNLTVQELADMLSIESSEIIKSLFFKGVIATVTQTLDMPTIEAVAQEFGVPVLQDDVEEAAKKTVEMIEEKDHAHLIRRPPVVTVMGHVDHGKTSLLDAIRQARVAAGEAGGITQHIGAYQVEIQHNDSPQRLTFLDTPGHEAFTAMRARGTKVTDVAVLVVAADDGVRPQTLEAISHARAAEVPVVVAINKIDKEGASPDRVKQELSEQNLLAEDWGGDVVMVPVSALRGENIDKLLEMILLVTEVEDLQANPDRLAKGTVIEAHLDKAKGPVATLLVQNGTLRTGDVLAAGPVLGKVRAMVDDGGGRLKEAGPSCAVEALGFSEVPTAGDEFEVYPDEKSARAVVGDRASDARASRLAQQMASRRVSLTAMSGQAKEGELKELNLILKADVQGSVEAILGSLEQLPKDEVQVRVLLSAPGEVTETDVDLAAASGAVIVGFNTSMASGAKRAADANSVDVRDYDVIYKLLEDIQLAMEGLLEPELVEESLGEAEVRAVFTIGKSAVAGCYVTTGKLQRNCKVRVRRGKEIVFAGDLDSLRRNKDDVKDVATGFECGIGCDRFANWKDGDIVEGYKLVTQRRKLAT</sequence>
<keyword id="KW-0963">Cytoplasm</keyword>
<keyword id="KW-0342">GTP-binding</keyword>
<keyword id="KW-0396">Initiation factor</keyword>
<keyword id="KW-0547">Nucleotide-binding</keyword>
<keyword id="KW-0648">Protein biosynthesis</keyword>
<keyword id="KW-1185">Reference proteome</keyword>